<evidence type="ECO:0000250" key="1">
    <source>
        <dbReference type="UniProtKB" id="P26672"/>
    </source>
</evidence>
<evidence type="ECO:0000305" key="2"/>
<organismHost>
    <name type="scientific">Homo sapiens</name>
    <name type="common">Human</name>
    <dbReference type="NCBI Taxonomy" id="9606"/>
</organismHost>
<dbReference type="EMBL" id="M35027">
    <property type="protein sequence ID" value="AAA48177.1"/>
    <property type="molecule type" value="Genomic_DNA"/>
</dbReference>
<dbReference type="PIR" id="C42522">
    <property type="entry name" value="C42522"/>
</dbReference>
<dbReference type="SMR" id="P21066"/>
<dbReference type="Proteomes" id="UP000008269">
    <property type="component" value="Segment"/>
</dbReference>
<dbReference type="GO" id="GO:0039548">
    <property type="term" value="P:symbiont-mediated suppression of host cytoplasmic pattern recognition receptor signaling pathway via inhibition of IRF3 activity"/>
    <property type="evidence" value="ECO:0007669"/>
    <property type="project" value="UniProtKB-KW"/>
</dbReference>
<dbReference type="GO" id="GO:0085034">
    <property type="term" value="P:symbiont-mediated suppression of host NF-kappaB cascade"/>
    <property type="evidence" value="ECO:0007669"/>
    <property type="project" value="UniProtKB-KW"/>
</dbReference>
<dbReference type="Gene3D" id="1.10.437.20">
    <property type="entry name" value="dsDNA poxvirus"/>
    <property type="match status" value="1"/>
</dbReference>
<dbReference type="InterPro" id="IPR022819">
    <property type="entry name" value="Poxvirus_Bcl-2-like"/>
</dbReference>
<dbReference type="InterPro" id="IPR043018">
    <property type="entry name" value="Poxvirus_sf"/>
</dbReference>
<dbReference type="Pfam" id="PF06227">
    <property type="entry name" value="Poxv_Bcl-2-like"/>
    <property type="match status" value="1"/>
</dbReference>
<protein>
    <recommendedName>
        <fullName>Protein OPG176</fullName>
    </recommendedName>
</protein>
<proteinExistence type="evidence at transcript level"/>
<keyword id="KW-0244">Early protein</keyword>
<keyword id="KW-0945">Host-virus interaction</keyword>
<keyword id="KW-1090">Inhibition of host innate immune response by virus</keyword>
<keyword id="KW-1092">Inhibition of host IRF3 by virus</keyword>
<keyword id="KW-1100">Inhibition of host NF-kappa-B by virus</keyword>
<keyword id="KW-1113">Inhibition of host RLR pathway by virus</keyword>
<keyword id="KW-1185">Reference proteome</keyword>
<keyword id="KW-0899">Viral immunoevasion</keyword>
<gene>
    <name type="primary">OPG176</name>
    <name type="ORF">A46R</name>
</gene>
<name>PG176_VACCC</name>
<sequence>MAFDISVNASKTINALVYFSTQQNKLVIRNEVNDTHYTVEFDRDKVVDTFISYNRHNDTIEIRGVLPEETNIGCAVNTPVSMTYLYNKYSFKLILAEYIRHRNTISGNIYSALMTLDDLAIKQYGDIDLLFNEKLKVDSDSGLFDFVNFVKDMICCDSRIVVALSSLVSKHWELTNKKYRCMALANIYLIVFQYLSYLDYDTIYVSIYAGTLRA</sequence>
<accession>P21066</accession>
<comment type="function">
    <text evidence="1">BCL2-like protein which disrupts the host immune response by inhibiting the TLR4 signaling pathway leading to NF-kappa-B activation. Acts close to the plasma membrane and targets several host TIR-domain containing adapter proteins including MYD88, TIRAP, TRIF and TICAM2. In turn, blocks the host NF-kappa-B and TRIF-mediated IRF3 activation.</text>
</comment>
<comment type="subunit">
    <text evidence="1">Tetramer. Interacts with host MYD88, TRF4, TICAM2 and MAL.</text>
</comment>
<comment type="induction">
    <text>Expressed in the early phase of the viral replicative cycle.</text>
</comment>
<comment type="similarity">
    <text evidence="2">Belongs to the orthopoxvirus OPG176 family.</text>
</comment>
<feature type="chain" id="PRO_0000099334" description="Protein OPG176">
    <location>
        <begin position="1"/>
        <end position="214"/>
    </location>
</feature>
<organism>
    <name type="scientific">Vaccinia virus (strain Copenhagen)</name>
    <name type="common">VACV</name>
    <dbReference type="NCBI Taxonomy" id="10249"/>
    <lineage>
        <taxon>Viruses</taxon>
        <taxon>Varidnaviria</taxon>
        <taxon>Bamfordvirae</taxon>
        <taxon>Nucleocytoviricota</taxon>
        <taxon>Pokkesviricetes</taxon>
        <taxon>Chitovirales</taxon>
        <taxon>Poxviridae</taxon>
        <taxon>Chordopoxvirinae</taxon>
        <taxon>Orthopoxvirus</taxon>
        <taxon>Vaccinia virus</taxon>
    </lineage>
</organism>
<reference key="1">
    <citation type="journal article" date="1990" name="Virology">
        <title>The complete DNA sequence of vaccinia virus.</title>
        <authorList>
            <person name="Goebel S.J."/>
            <person name="Johnson G.P."/>
            <person name="Perkus M.E."/>
            <person name="Davis S.W."/>
            <person name="Winslow J.P."/>
            <person name="Paoletti E."/>
        </authorList>
    </citation>
    <scope>NUCLEOTIDE SEQUENCE [LARGE SCALE GENOMIC DNA]</scope>
</reference>
<reference key="2">
    <citation type="journal article" date="1990" name="Virology">
        <title>Appendix to 'The complete DNA sequence of vaccinia virus'.</title>
        <authorList>
            <person name="Goebel S.J."/>
            <person name="Johnson G.P."/>
            <person name="Perkus M.E."/>
            <person name="Davis S.W."/>
            <person name="Winslow J.P."/>
            <person name="Paoletti E."/>
        </authorList>
    </citation>
    <scope>NUCLEOTIDE SEQUENCE [LARGE SCALE GENOMIC DNA]</scope>
</reference>